<comment type="function">
    <text evidence="1">Peptide chain release factor 2 directs the termination of translation in response to the peptide chain termination codons UGA and UAA.</text>
</comment>
<comment type="subcellular location">
    <subcellularLocation>
        <location evidence="1">Cytoplasm</location>
    </subcellularLocation>
</comment>
<comment type="PTM">
    <text evidence="1">Methylated by PrmC. Methylation increases the termination efficiency of RF2.</text>
</comment>
<comment type="similarity">
    <text evidence="1">Belongs to the prokaryotic/mitochondrial release factor family.</text>
</comment>
<dbReference type="EMBL" id="AE004969">
    <property type="protein sequence ID" value="AAW90562.1"/>
    <property type="molecule type" value="Genomic_DNA"/>
</dbReference>
<dbReference type="RefSeq" id="WP_003688127.1">
    <property type="nucleotide sequence ID" value="NC_002946.2"/>
</dbReference>
<dbReference type="RefSeq" id="YP_208974.1">
    <property type="nucleotide sequence ID" value="NC_002946.2"/>
</dbReference>
<dbReference type="SMR" id="Q5F5H5"/>
<dbReference type="STRING" id="242231.NGO_1951"/>
<dbReference type="GeneID" id="66754167"/>
<dbReference type="KEGG" id="ngo:NGO_1951"/>
<dbReference type="PATRIC" id="fig|242231.10.peg.2349"/>
<dbReference type="HOGENOM" id="CLU_036856_6_0_4"/>
<dbReference type="Proteomes" id="UP000000535">
    <property type="component" value="Chromosome"/>
</dbReference>
<dbReference type="GO" id="GO:0005737">
    <property type="term" value="C:cytoplasm"/>
    <property type="evidence" value="ECO:0007669"/>
    <property type="project" value="UniProtKB-SubCell"/>
</dbReference>
<dbReference type="GO" id="GO:0016149">
    <property type="term" value="F:translation release factor activity, codon specific"/>
    <property type="evidence" value="ECO:0007669"/>
    <property type="project" value="UniProtKB-UniRule"/>
</dbReference>
<dbReference type="FunFam" id="3.30.160.20:FF:000010">
    <property type="entry name" value="Peptide chain release factor 2"/>
    <property type="match status" value="1"/>
</dbReference>
<dbReference type="Gene3D" id="3.30.160.20">
    <property type="match status" value="1"/>
</dbReference>
<dbReference type="Gene3D" id="3.30.70.1660">
    <property type="match status" value="1"/>
</dbReference>
<dbReference type="Gene3D" id="1.20.58.410">
    <property type="entry name" value="Release factor"/>
    <property type="match status" value="1"/>
</dbReference>
<dbReference type="HAMAP" id="MF_00094">
    <property type="entry name" value="Rel_fac_2"/>
    <property type="match status" value="1"/>
</dbReference>
<dbReference type="InterPro" id="IPR005139">
    <property type="entry name" value="PCRF"/>
</dbReference>
<dbReference type="InterPro" id="IPR000352">
    <property type="entry name" value="Pep_chain_release_fac_I"/>
</dbReference>
<dbReference type="InterPro" id="IPR045853">
    <property type="entry name" value="Pep_chain_release_fac_I_sf"/>
</dbReference>
<dbReference type="InterPro" id="IPR004374">
    <property type="entry name" value="PrfB"/>
</dbReference>
<dbReference type="NCBIfam" id="TIGR00020">
    <property type="entry name" value="prfB"/>
    <property type="match status" value="1"/>
</dbReference>
<dbReference type="PANTHER" id="PTHR43116:SF3">
    <property type="entry name" value="CLASS I PEPTIDE CHAIN RELEASE FACTOR"/>
    <property type="match status" value="1"/>
</dbReference>
<dbReference type="PANTHER" id="PTHR43116">
    <property type="entry name" value="PEPTIDE CHAIN RELEASE FACTOR 2"/>
    <property type="match status" value="1"/>
</dbReference>
<dbReference type="Pfam" id="PF03462">
    <property type="entry name" value="PCRF"/>
    <property type="match status" value="1"/>
</dbReference>
<dbReference type="Pfam" id="PF00472">
    <property type="entry name" value="RF-1"/>
    <property type="match status" value="1"/>
</dbReference>
<dbReference type="SMART" id="SM00937">
    <property type="entry name" value="PCRF"/>
    <property type="match status" value="1"/>
</dbReference>
<dbReference type="SUPFAM" id="SSF75620">
    <property type="entry name" value="Release factor"/>
    <property type="match status" value="1"/>
</dbReference>
<dbReference type="PROSITE" id="PS00745">
    <property type="entry name" value="RF_PROK_I"/>
    <property type="match status" value="1"/>
</dbReference>
<feature type="chain" id="PRO_0000166833" description="Peptide chain release factor 2">
    <location>
        <begin position="1"/>
        <end position="367"/>
    </location>
</feature>
<feature type="modified residue" description="N5-methylglutamine" evidence="1">
    <location>
        <position position="254"/>
    </location>
</feature>
<evidence type="ECO:0000255" key="1">
    <source>
        <dbReference type="HAMAP-Rule" id="MF_00094"/>
    </source>
</evidence>
<name>RF2_NEIG1</name>
<accession>Q5F5H5</accession>
<reference key="1">
    <citation type="submission" date="2003-03" db="EMBL/GenBank/DDBJ databases">
        <title>The complete genome sequence of Neisseria gonorrhoeae.</title>
        <authorList>
            <person name="Lewis L.A."/>
            <person name="Gillaspy A.F."/>
            <person name="McLaughlin R.E."/>
            <person name="Gipson M."/>
            <person name="Ducey T.F."/>
            <person name="Ownbey T."/>
            <person name="Hartman K."/>
            <person name="Nydick C."/>
            <person name="Carson M.B."/>
            <person name="Vaughn J."/>
            <person name="Thomson C."/>
            <person name="Song L."/>
            <person name="Lin S."/>
            <person name="Yuan X."/>
            <person name="Najar F."/>
            <person name="Zhan M."/>
            <person name="Ren Q."/>
            <person name="Zhu H."/>
            <person name="Qi S."/>
            <person name="Kenton S.M."/>
            <person name="Lai H."/>
            <person name="White J.D."/>
            <person name="Clifton S."/>
            <person name="Roe B.A."/>
            <person name="Dyer D.W."/>
        </authorList>
    </citation>
    <scope>NUCLEOTIDE SEQUENCE [LARGE SCALE GENOMIC DNA]</scope>
    <source>
        <strain>ATCC 700825 / FA 1090</strain>
    </source>
</reference>
<protein>
    <recommendedName>
        <fullName evidence="1">Peptide chain release factor 2</fullName>
        <shortName evidence="1">RF-2</shortName>
    </recommendedName>
</protein>
<gene>
    <name evidence="1" type="primary">prfB</name>
    <name type="ordered locus">NGO_1951</name>
</gene>
<organism>
    <name type="scientific">Neisseria gonorrhoeae (strain ATCC 700825 / FA 1090)</name>
    <dbReference type="NCBI Taxonomy" id="242231"/>
    <lineage>
        <taxon>Bacteria</taxon>
        <taxon>Pseudomonadati</taxon>
        <taxon>Pseudomonadota</taxon>
        <taxon>Betaproteobacteria</taxon>
        <taxon>Neisseriales</taxon>
        <taxon>Neisseriaceae</taxon>
        <taxon>Neisseria</taxon>
    </lineage>
</organism>
<keyword id="KW-0963">Cytoplasm</keyword>
<keyword id="KW-0488">Methylation</keyword>
<keyword id="KW-0648">Protein biosynthesis</keyword>
<keyword id="KW-1185">Reference proteome</keyword>
<proteinExistence type="inferred from homology"/>
<sequence length="367" mass="41362">MEAEVINQLNNTLNDLEKRSEDIRVYMDYQGKKDRLEEVIGLSEDPELWNDPKRAQEIGKESKILEGIVLTLDNIASGIEDNRMLIEMAVEENDEEGFAAVKEDVAGLEKQMADLEFKRMFNQPADPNNCFIDITAGAGGTEAEDWAGMLFRMYSRYAERKGFKIEILEEDDGEIAGINRATIRVEGEYAYGLLRTETGVHRLVRYSPFDSNNKRHTSFASVFVYPEIDDSIEIEINPADLRIDTYRASGAGGQHINKTDSAVRITHEPTGIVVQCQNDRSQHANKAAAMEMLKSKLYELEMRKRNEEKQALEEGKSDVGWGSQIRSYVLDSSRIKDLRTGYEVGNTKAVLDGDLDGFIEASLKQGV</sequence>